<name>TAZA_ASPTN</name>
<keyword id="KW-0012">Acyltransferase</keyword>
<keyword id="KW-0511">Multifunctional enzyme</keyword>
<keyword id="KW-0521">NADP</keyword>
<keyword id="KW-0596">Phosphopantetheine</keyword>
<keyword id="KW-0597">Phosphoprotein</keyword>
<keyword id="KW-1185">Reference proteome</keyword>
<keyword id="KW-0808">Transferase</keyword>
<organism>
    <name type="scientific">Aspergillus terreus (strain NIH 2624 / FGSC A1156)</name>
    <dbReference type="NCBI Taxonomy" id="341663"/>
    <lineage>
        <taxon>Eukaryota</taxon>
        <taxon>Fungi</taxon>
        <taxon>Dikarya</taxon>
        <taxon>Ascomycota</taxon>
        <taxon>Pezizomycotina</taxon>
        <taxon>Eurotiomycetes</taxon>
        <taxon>Eurotiomycetidae</taxon>
        <taxon>Eurotiales</taxon>
        <taxon>Aspergillaceae</taxon>
        <taxon>Aspergillus</taxon>
        <taxon>Aspergillus subgen. Circumdati</taxon>
    </lineage>
</organism>
<accession>Q0CSA2</accession>
<feature type="chain" id="PRO_0000456064" description="Non-reducing polyketide synthase tazA">
    <location>
        <begin position="1"/>
        <end position="2556"/>
    </location>
</feature>
<feature type="domain" description="Ketosynthase family 3 (KS3)" evidence="4 10">
    <location>
        <begin position="397"/>
        <end position="769"/>
    </location>
</feature>
<feature type="domain" description="PKS/mFAS DH" evidence="5">
    <location>
        <begin position="1254"/>
        <end position="1560"/>
    </location>
</feature>
<feature type="domain" description="Carrier" evidence="3 10">
    <location>
        <begin position="1620"/>
        <end position="1694"/>
    </location>
</feature>
<feature type="region of interest" description="N-terminal acylcarrier protein transacylase domain (SAT)" evidence="2 10">
    <location>
        <begin position="16"/>
        <end position="270"/>
    </location>
</feature>
<feature type="region of interest" description="Malonyl-CoA:ACP transacylase (MAT) domain" evidence="2 10">
    <location>
        <begin position="876"/>
        <end position="1209"/>
    </location>
</feature>
<feature type="region of interest" description="N-terminal hotdog fold" evidence="5">
    <location>
        <begin position="1254"/>
        <end position="1383"/>
    </location>
</feature>
<feature type="region of interest" description="Product template (PT) domain" evidence="2 10">
    <location>
        <begin position="1257"/>
        <end position="1564"/>
    </location>
</feature>
<feature type="region of interest" description="C-terminal hotdog fold" evidence="5">
    <location>
        <begin position="1408"/>
        <end position="1560"/>
    </location>
</feature>
<feature type="region of interest" description="Disordered" evidence="6">
    <location>
        <begin position="1567"/>
        <end position="1621"/>
    </location>
</feature>
<feature type="region of interest" description="Disordered" evidence="6">
    <location>
        <begin position="1700"/>
        <end position="1731"/>
    </location>
</feature>
<feature type="region of interest" description="Methyltransferase domain" evidence="2 10">
    <location>
        <begin position="1830"/>
        <end position="2107"/>
    </location>
</feature>
<feature type="region of interest" description="NADPH-binding (R) domain" evidence="2 10">
    <location>
        <begin position="2180"/>
        <end position="2424"/>
    </location>
</feature>
<feature type="compositionally biased region" description="Polar residues" evidence="6">
    <location>
        <begin position="1577"/>
        <end position="1593"/>
    </location>
</feature>
<feature type="compositionally biased region" description="Polar residues" evidence="6">
    <location>
        <begin position="1702"/>
        <end position="1731"/>
    </location>
</feature>
<feature type="active site" description="Nucleophile; for transacylase activity" evidence="1">
    <location>
        <position position="143"/>
    </location>
</feature>
<feature type="active site" description="Proton donor/acceptor; for transacylase activity" evidence="1">
    <location>
        <position position="270"/>
    </location>
</feature>
<feature type="active site" description="Proton acceptor; for dehydratase activity" evidence="5">
    <location>
        <position position="1285"/>
    </location>
</feature>
<feature type="active site" description="Proton donor; for dehydratase activity" evidence="5">
    <location>
        <position position="1465"/>
    </location>
</feature>
<feature type="modified residue" description="O-(pantetheine 4'-phosphoryl)serine" evidence="3">
    <location>
        <position position="1654"/>
    </location>
</feature>
<sequence length="2556" mass="280182">MAVANHEEAEATTVLLFGPQALSFTEESFQRIRVALNDTENAWMRQVVEELPECTSRVAKQFPKLQATPAAKLQNSLRDWLRIDEGVAPAASKSLPNALLTPLVVLDHLAQYSQYVQLAHVETGLGTDRYGPQSRPTRNLGFCTGLLSALAVSSASNKAEFRKYAAVAVRLAAVIGALVDAEDAIGHHGESKTFSAAYHSSKQESELQSILQDFPEDADSTGNLQAYISVNYDEGRATITTSNRTAQAFQQRLREAGITAQAIGLRGRFHYQGYQQDLARLVEICDATPELRLPDVTDAVIPIHSLSGGGLITEGRLHHIALREILVEQSQWGKTFDAMSRSSLANTQSLLVSFGFEKCVPPSAMPRVGGQVVYMTDQRDARLRLSAVKTPGEMVSEDEIAVIGMAIKVAGADDADEFWDLNLTAESQHREVPAERFTFETHWRTVDPARKWYGNFVRDHDAFDHKFFQKSPREATTQDPQQRIFLQSAYQAVEQSGYFNSLHADRNVGVSVITLDGMGMDTSLYPTLYQVDSGECTAALAGGTNIMTSPLWFQNLAGASFLSQTGPCKPFDAKADGYCRGEGVACVFLKKMTKAIEDGNTIIGSIRSTAVYQNDNCTPIFVPNAPSLSGLFDDVVRKSGLSPKDITLVEAHGTGTPVGDPAEWDSIRKTLGGRSVRSVPMPVGSVKGLIGHTECTSGVVALIKVLLLIHYGIIPPQASFQTLSPALKATADDMLEVCTKQTPWNVEYRAALINNYGASGSNASMIVTQPPKLRGNGPFSPPTDGGKYAFWLTGLDERSLRDYARRLSGFLASKKISSLSSLSFNAYRQSNRALPHGLIFSSSSMEELQTQLTDFAKGNGKLSATTRKPVRPVILCFGGQISRFVGLDKAVYESIGTLRTHLDRCDATLQSLGLDGLYPGIFERSQVDDPVKLQTMLFALQYSCAKCWLDCGLQPVAVVGHSFGELTALCIAGVLTLRDSLQVVAMRAQLIKSSWGPDPGAMMAVEGNLADVQTLLKNAERACPEETPATVACFNGPTTFTLAGSTKAIDAVSECISSVSVVRGKKLSVSNAFHSTLVEPLKDQLGQLAEGMIFGEAKIRWERATENQTSANIGPEFFASHMRDPVYANHALQRLHREFPSAIWLEAGSNSTITRMANKALGFPAESYFADINITSDSASNTLTESFVNLWKEGLAIPHWAHHCTQAPAYSTLLLPPYQFEKSRHWLELKKPQAVQLIELPSKAQQEELPTKLYTFVGYQDEGKRQARFRVNTMIKAYEEFVSGHLIVQTAAICPATLEVDITIEALFTLCPDFKATGLQPQVANVENLVPICVDPSRVLWLDLRATTSDFKSWEWQMVSTNEKGESKSTHVKGQIIFQSAAEAQAEFSRYERLVPHRRCTEILNDSDPDDVLQGRNMYKVFAEIVDYSEPYRGLRKLVGKGTTSAGRVVKQRSGETWLDTHISDCFSQVGGFWVNCMTDRSASDMYIAAGFESWIRRPGSTAAQDDPEKTSVWDVMACHVKASEKAYTTDIFIFDATSGLLSEIILGINYSRLPKSTMSKMLTKLTAPSERRAQVDSPSMPASINAPPSASEQAPVEPAPQTKESAPIAEPGAGGQSNSKVPGIVVEVLAELSGVEPDAIKMSTKLADIGIDSLVGMEMVHDLESKCECSLDMDEMAEVVTVNDVVQCVHKTLGIEGGSAAQESEGNLTPASSGTQSPRSDPVSDTSLSDLEQLPRKESDLELQLSASDVLGAFGETKKLTDQFITDFNCAGYMDNINPKQTQLCIALTIEAFEKLGCNLRTAKAGEALPRISHAPQHGRLTQYLYDMLEHEGRLIDIDGDRIVRTAVSVPHKSSKEILASLEAAYPEHVCANRLAFFCGTRLVEVLEGKLDGVKLIFGNEEGRQLVAGLYGDTQLNRIFYKQMEDILTRLISRIPRDSGPLRILEMGAGTGGTTKYLVPLLAKLGAPVEYTFTDLAPSFVAAARRQYKAYPFMKFHAHDIEQEPAQDLLGTQHIIIASNAVHATHSLTVSAKNMRKALRPDGFLMMLEMTQTVPWVDIIFGLLEGWWLFDDGRQHAISPESRWEKDLQSVGYGHIDWTDGHLAENKLQRIIIAMASGPQGGRLPLPAPPIAQSTSNITERATAVEGYVDRFTSGFAMQPLASAPGTTVRKDSAQCVLVTGATGSLGAHLVKELLGRSDVATVICLNRLSRGTNPEQRQYRSFEEKGLKLDSSQSAKLRIIETDTSKPLLGLSAEQYEEVAHMVTAIVHNAWPMSGARPLRGFEAQFSVMRNLIDLARDAAYVSQTITFQFISSIAVVGHYPLWSRERNVPEERVGIESILPNGYGDAKYVCERMLDATLHKYPDHFRAMGVRLGQVAGSSETGYWNSLEHLSFLVKSSQTLRALPDFQGELSWTPVDVVASTLADLVSYAAADFSAASTVYPIYHIDNPVRQPWKEMISVLARALDIPPANVLPFPEWVRRVRRFPGSTEKDNPAFKLIDFLDDNFVRMSCGGLLLDTRHTQQHSPTLAAQGPVSNQVAEGYIRYWKRTGFLAG</sequence>
<proteinExistence type="evidence at protein level"/>
<gene>
    <name evidence="9" type="primary">tazA</name>
    <name type="ORF">ATEG_03432</name>
</gene>
<comment type="function">
    <text evidence="7 8 10">Non-reducing polyketide synthase; part of the gene cluster that mediates the biosynthesis of azaterrilone A and other azaphilones, a class of fungal metabolites characterized by a highly oxygenated pyrano-quinone bicyclic core and exhibiting a broad range of bioactivities (PubMed:35398258). The first step of the pathway begins with tazA that assembles one acetyl-CoA starter unit, five malonyl-CoA units, and catalyzes a series of Claisen condensations, methylation, PT-mediated cyclization, and finally releases the first hexaketide precursor through the R-domain (PubMed:23621425, PubMed:35398258). The tazA product then undergoes reduction on its terminal ketone and the following pyran-ring formation by yet undetermined enzyme(s). Dehydration and enoyl reduction, possibly involving the trans-enoyl reductase tazE leads to the next intermediate. TazD is predicted as an acetyltransferase and might catalyze the acetylation steps leading to the synthesis of azaterrilone A. Azaterrilone A is not the final product of the taz pathway and both the highly reducing polyketide synthase tazB and the dual enzyme tazHJ catalyze late steps of the pathway, leading to the production of the 2 final stereoisomers that contain additional polyketide modification whose structures have still to be determined (Probable).</text>
</comment>
<comment type="cofactor">
    <cofactor evidence="3">
        <name>pantetheine 4'-phosphate</name>
        <dbReference type="ChEBI" id="CHEBI:47942"/>
    </cofactor>
</comment>
<comment type="pathway">
    <text evidence="8">Secondary metabolite biosynthesis.</text>
</comment>
<comment type="induction">
    <text evidence="8">Expression is positively regulated by the azaterrilone A cluster-specific transcription factor tazR.</text>
</comment>
<comment type="domain">
    <text evidence="10">Multidomain protein; including an N-terminal starter unit:ACP transacylase (SAT) domain, a beta-ketoacyl synthase (KS) domain, a malonyl-CoA:ACP transacylase (MAT) domain, a product template domain, a acyl carrier protein (ACP) domain, a methyltransferase domain and a reductive NADPH-binding domain that is required for NADPH-dependent product release.</text>
</comment>
<comment type="disruption phenotype">
    <text evidence="8">Impairs the production of azaphilone compounds.</text>
</comment>
<dbReference type="EC" id="2.3.1.-" evidence="7"/>
<dbReference type="EMBL" id="CH476597">
    <property type="protein sequence ID" value="EAU36706.1"/>
    <property type="molecule type" value="Genomic_DNA"/>
</dbReference>
<dbReference type="RefSeq" id="XP_001212610.1">
    <property type="nucleotide sequence ID" value="XM_001212610.1"/>
</dbReference>
<dbReference type="SMR" id="Q0CSA2"/>
<dbReference type="STRING" id="341663.Q0CSA2"/>
<dbReference type="EnsemblFungi" id="EAU36706">
    <property type="protein sequence ID" value="EAU36706"/>
    <property type="gene ID" value="ATEG_03432"/>
</dbReference>
<dbReference type="GeneID" id="4318027"/>
<dbReference type="VEuPathDB" id="FungiDB:ATEG_03432"/>
<dbReference type="eggNOG" id="KOG1178">
    <property type="taxonomic scope" value="Eukaryota"/>
</dbReference>
<dbReference type="eggNOG" id="KOG1202">
    <property type="taxonomic scope" value="Eukaryota"/>
</dbReference>
<dbReference type="HOGENOM" id="CLU_000022_6_2_1"/>
<dbReference type="OMA" id="FRINTMI"/>
<dbReference type="OrthoDB" id="329835at2759"/>
<dbReference type="Proteomes" id="UP000007963">
    <property type="component" value="Unassembled WGS sequence"/>
</dbReference>
<dbReference type="GO" id="GO:0016746">
    <property type="term" value="F:acyltransferase activity"/>
    <property type="evidence" value="ECO:0007669"/>
    <property type="project" value="UniProtKB-KW"/>
</dbReference>
<dbReference type="GO" id="GO:0009058">
    <property type="term" value="P:biosynthetic process"/>
    <property type="evidence" value="ECO:0007669"/>
    <property type="project" value="UniProtKB-ARBA"/>
</dbReference>
<dbReference type="CDD" id="cd02440">
    <property type="entry name" value="AdoMet_MTases"/>
    <property type="match status" value="1"/>
</dbReference>
<dbReference type="CDD" id="cd00833">
    <property type="entry name" value="PKS"/>
    <property type="match status" value="1"/>
</dbReference>
<dbReference type="Gene3D" id="3.30.70.3290">
    <property type="match status" value="1"/>
</dbReference>
<dbReference type="Gene3D" id="3.40.47.10">
    <property type="match status" value="2"/>
</dbReference>
<dbReference type="Gene3D" id="1.10.1200.10">
    <property type="entry name" value="ACP-like"/>
    <property type="match status" value="1"/>
</dbReference>
<dbReference type="Gene3D" id="3.40.366.10">
    <property type="entry name" value="Malonyl-Coenzyme A Acyl Carrier Protein, domain 2"/>
    <property type="match status" value="2"/>
</dbReference>
<dbReference type="Gene3D" id="3.40.50.720">
    <property type="entry name" value="NAD(P)-binding Rossmann-like Domain"/>
    <property type="match status" value="1"/>
</dbReference>
<dbReference type="Gene3D" id="3.10.129.110">
    <property type="entry name" value="Polyketide synthase dehydratase"/>
    <property type="match status" value="1"/>
</dbReference>
<dbReference type="Gene3D" id="3.40.50.150">
    <property type="entry name" value="Vaccinia Virus protein VP39"/>
    <property type="match status" value="1"/>
</dbReference>
<dbReference type="InterPro" id="IPR001227">
    <property type="entry name" value="Ac_transferase_dom_sf"/>
</dbReference>
<dbReference type="InterPro" id="IPR036736">
    <property type="entry name" value="ACP-like_sf"/>
</dbReference>
<dbReference type="InterPro" id="IPR014043">
    <property type="entry name" value="Acyl_transferase_dom"/>
</dbReference>
<dbReference type="InterPro" id="IPR016035">
    <property type="entry name" value="Acyl_Trfase/lysoPLipase"/>
</dbReference>
<dbReference type="InterPro" id="IPR013120">
    <property type="entry name" value="Far_NAD-bd"/>
</dbReference>
<dbReference type="InterPro" id="IPR014031">
    <property type="entry name" value="Ketoacyl_synth_C"/>
</dbReference>
<dbReference type="InterPro" id="IPR014030">
    <property type="entry name" value="Ketoacyl_synth_N"/>
</dbReference>
<dbReference type="InterPro" id="IPR016036">
    <property type="entry name" value="Malonyl_transacylase_ACP-bd"/>
</dbReference>
<dbReference type="InterPro" id="IPR013217">
    <property type="entry name" value="Methyltransf_12"/>
</dbReference>
<dbReference type="InterPro" id="IPR036291">
    <property type="entry name" value="NAD(P)-bd_dom_sf"/>
</dbReference>
<dbReference type="InterPro" id="IPR020841">
    <property type="entry name" value="PKS_Beta-ketoAc_synthase_dom"/>
</dbReference>
<dbReference type="InterPro" id="IPR042104">
    <property type="entry name" value="PKS_dehydratase_sf"/>
</dbReference>
<dbReference type="InterPro" id="IPR049900">
    <property type="entry name" value="PKS_mFAS_DH"/>
</dbReference>
<dbReference type="InterPro" id="IPR050444">
    <property type="entry name" value="Polyketide_Synthase"/>
</dbReference>
<dbReference type="InterPro" id="IPR009081">
    <property type="entry name" value="PP-bd_ACP"/>
</dbReference>
<dbReference type="InterPro" id="IPR006162">
    <property type="entry name" value="Ppantetheine_attach_site"/>
</dbReference>
<dbReference type="InterPro" id="IPR029063">
    <property type="entry name" value="SAM-dependent_MTases_sf"/>
</dbReference>
<dbReference type="InterPro" id="IPR032088">
    <property type="entry name" value="SAT"/>
</dbReference>
<dbReference type="InterPro" id="IPR016039">
    <property type="entry name" value="Thiolase-like"/>
</dbReference>
<dbReference type="PANTHER" id="PTHR45681:SF6">
    <property type="entry name" value="POLYKETIDE SYNTHASE 37"/>
    <property type="match status" value="1"/>
</dbReference>
<dbReference type="PANTHER" id="PTHR45681">
    <property type="entry name" value="POLYKETIDE SYNTHASE 44-RELATED"/>
    <property type="match status" value="1"/>
</dbReference>
<dbReference type="Pfam" id="PF00698">
    <property type="entry name" value="Acyl_transf_1"/>
    <property type="match status" value="1"/>
</dbReference>
<dbReference type="Pfam" id="PF18558">
    <property type="entry name" value="HTH_51"/>
    <property type="match status" value="1"/>
</dbReference>
<dbReference type="Pfam" id="PF00109">
    <property type="entry name" value="ketoacyl-synt"/>
    <property type="match status" value="2"/>
</dbReference>
<dbReference type="Pfam" id="PF02801">
    <property type="entry name" value="Ketoacyl-synt_C"/>
    <property type="match status" value="1"/>
</dbReference>
<dbReference type="Pfam" id="PF08242">
    <property type="entry name" value="Methyltransf_12"/>
    <property type="match status" value="1"/>
</dbReference>
<dbReference type="Pfam" id="PF07993">
    <property type="entry name" value="NAD_binding_4"/>
    <property type="match status" value="1"/>
</dbReference>
<dbReference type="Pfam" id="PF00550">
    <property type="entry name" value="PP-binding"/>
    <property type="match status" value="1"/>
</dbReference>
<dbReference type="Pfam" id="PF16073">
    <property type="entry name" value="SAT"/>
    <property type="match status" value="1"/>
</dbReference>
<dbReference type="SMART" id="SM00827">
    <property type="entry name" value="PKS_AT"/>
    <property type="match status" value="1"/>
</dbReference>
<dbReference type="SMART" id="SM00825">
    <property type="entry name" value="PKS_KS"/>
    <property type="match status" value="1"/>
</dbReference>
<dbReference type="SUPFAM" id="SSF47336">
    <property type="entry name" value="ACP-like"/>
    <property type="match status" value="1"/>
</dbReference>
<dbReference type="SUPFAM" id="SSF52151">
    <property type="entry name" value="FabD/lysophospholipase-like"/>
    <property type="match status" value="1"/>
</dbReference>
<dbReference type="SUPFAM" id="SSF51735">
    <property type="entry name" value="NAD(P)-binding Rossmann-fold domains"/>
    <property type="match status" value="1"/>
</dbReference>
<dbReference type="SUPFAM" id="SSF55048">
    <property type="entry name" value="Probable ACP-binding domain of malonyl-CoA ACP transacylase"/>
    <property type="match status" value="1"/>
</dbReference>
<dbReference type="SUPFAM" id="SSF53335">
    <property type="entry name" value="S-adenosyl-L-methionine-dependent methyltransferases"/>
    <property type="match status" value="1"/>
</dbReference>
<dbReference type="SUPFAM" id="SSF53901">
    <property type="entry name" value="Thiolase-like"/>
    <property type="match status" value="2"/>
</dbReference>
<dbReference type="PROSITE" id="PS50075">
    <property type="entry name" value="CARRIER"/>
    <property type="match status" value="1"/>
</dbReference>
<dbReference type="PROSITE" id="PS52004">
    <property type="entry name" value="KS3_2"/>
    <property type="match status" value="1"/>
</dbReference>
<dbReference type="PROSITE" id="PS00012">
    <property type="entry name" value="PHOSPHOPANTETHEINE"/>
    <property type="match status" value="1"/>
</dbReference>
<dbReference type="PROSITE" id="PS52019">
    <property type="entry name" value="PKS_MFAS_DH"/>
    <property type="match status" value="1"/>
</dbReference>
<protein>
    <recommendedName>
        <fullName evidence="9">Non-reducing polyketide synthase tazA</fullName>
        <shortName evidence="9">NR-PKS tazA</shortName>
        <ecNumber evidence="7">2.3.1.-</ecNumber>
    </recommendedName>
    <alternativeName>
        <fullName evidence="9">Azaphilone biosynthesis cluster protein A</fullName>
    </alternativeName>
</protein>
<evidence type="ECO:0000250" key="1">
    <source>
        <dbReference type="UniProtKB" id="A0A0K0MCJ4"/>
    </source>
</evidence>
<evidence type="ECO:0000255" key="2"/>
<evidence type="ECO:0000255" key="3">
    <source>
        <dbReference type="PROSITE-ProRule" id="PRU00258"/>
    </source>
</evidence>
<evidence type="ECO:0000255" key="4">
    <source>
        <dbReference type="PROSITE-ProRule" id="PRU01348"/>
    </source>
</evidence>
<evidence type="ECO:0000255" key="5">
    <source>
        <dbReference type="PROSITE-ProRule" id="PRU01363"/>
    </source>
</evidence>
<evidence type="ECO:0000256" key="6">
    <source>
        <dbReference type="SAM" id="MobiDB-lite"/>
    </source>
</evidence>
<evidence type="ECO:0000269" key="7">
    <source>
    </source>
</evidence>
<evidence type="ECO:0000269" key="8">
    <source>
    </source>
</evidence>
<evidence type="ECO:0000303" key="9">
    <source>
    </source>
</evidence>
<evidence type="ECO:0000305" key="10">
    <source>
    </source>
</evidence>
<reference key="1">
    <citation type="submission" date="2005-09" db="EMBL/GenBank/DDBJ databases">
        <title>Annotation of the Aspergillus terreus NIH2624 genome.</title>
        <authorList>
            <person name="Birren B.W."/>
            <person name="Lander E.S."/>
            <person name="Galagan J.E."/>
            <person name="Nusbaum C."/>
            <person name="Devon K."/>
            <person name="Henn M."/>
            <person name="Ma L.-J."/>
            <person name="Jaffe D.B."/>
            <person name="Butler J."/>
            <person name="Alvarez P."/>
            <person name="Gnerre S."/>
            <person name="Grabherr M."/>
            <person name="Kleber M."/>
            <person name="Mauceli E.W."/>
            <person name="Brockman W."/>
            <person name="Rounsley S."/>
            <person name="Young S.K."/>
            <person name="LaButti K."/>
            <person name="Pushparaj V."/>
            <person name="DeCaprio D."/>
            <person name="Crawford M."/>
            <person name="Koehrsen M."/>
            <person name="Engels R."/>
            <person name="Montgomery P."/>
            <person name="Pearson M."/>
            <person name="Howarth C."/>
            <person name="Larson L."/>
            <person name="Luoma S."/>
            <person name="White J."/>
            <person name="Alvarado L."/>
            <person name="Kodira C.D."/>
            <person name="Zeng Q."/>
            <person name="Oleary S."/>
            <person name="Yandava C."/>
            <person name="Denning D.W."/>
            <person name="Nierman W.C."/>
            <person name="Milne T."/>
            <person name="Madden K."/>
        </authorList>
    </citation>
    <scope>NUCLEOTIDE SEQUENCE [LARGE SCALE GENOMIC DNA]</scope>
    <source>
        <strain>NIH 2624 / FGSC A1156</strain>
    </source>
</reference>
<reference key="2">
    <citation type="journal article" date="2013" name="J. Am. Chem. Soc.">
        <title>An efficient system for heterologous expression of secondary metabolite genes in Aspergillus nidulans.</title>
        <authorList>
            <person name="Chiang Y.M."/>
            <person name="Oakley C.E."/>
            <person name="Ahuja M."/>
            <person name="Entwistle R."/>
            <person name="Schultz A."/>
            <person name="Chang S.L."/>
            <person name="Sung C.T."/>
            <person name="Wang C.C."/>
            <person name="Oakley B.R."/>
        </authorList>
    </citation>
    <scope>FUNCTION</scope>
    <scope>CATALYTIC ACTIVITY</scope>
</reference>
<reference key="3">
    <citation type="journal article" date="2022" name="Fungal Genet. Biol.">
        <title>Characterization of a silent azaphilone biosynthesis gene cluster in Aspergillus terreus NIH 2624.</title>
        <authorList>
            <person name="Sun W.W."/>
            <person name="Li C.Y."/>
            <person name="Chiang Y.M."/>
            <person name="Lin T.S."/>
            <person name="Warren S."/>
            <person name="Chang F.R."/>
            <person name="Wang C.C.C."/>
        </authorList>
    </citation>
    <scope>FUNCTION</scope>
    <scope>DOMAIN</scope>
    <scope>INDUCTION</scope>
    <scope>DISRUPTION PHENOTYPE</scope>
    <scope>PATHWAY</scope>
</reference>